<sequence>MSASPLLGMSRREFLTKLTGAGAAAFLMDWAAPVIEKAYGAGPCPGHLTDIEHIVLLMQENRSFDHYFGTLSSTNGFNAASPAFQQMGWNPMTQALDPAGVTIPFRLDTTRGPFLDGECVNDPEHQWVGMHLAWNGGANDNWLPAQATTRAGPYVPLTMGYYTRQDIPIHYLLADTFTICDGYHCSLLTGTLPNRLYWLSANIDPAGTDGGPQLVEPGFLPLQQFSWRIMPENLEDAGVSWKVYQNKGLGRFINTPISNNGLVQAFRQAADPRSNLARYGIAPTYPGDFAADVRANRLPKVSWLVPNILQSEHPALPVALGAVSMVTALRILLSNPAVWEKTALIVSYDENGGFFDHVTPPTAPPGTPGEFVTVPNIDAVPGSGGIRGPLGLGFRVPCIVISPYSRGPLMVSDTFDHTSQLKLIRARFGVPVPNMTAWRDGVVGDMTSAFNFATPPNSTRPNLSHPLLGALPKLPQCIPNVVLGTTDGALPSIPYRVPYPQVMPTQETTPVRGTPSGLCS</sequence>
<protein>
    <recommendedName>
        <fullName evidence="10">Phospholipase C A</fullName>
        <shortName evidence="8">PLC-A</shortName>
        <ecNumber evidence="4 5">3.1.4.3</ecNumber>
    </recommendedName>
    <alternativeName>
        <fullName>MTP40 antigen</fullName>
    </alternativeName>
    <alternativeName>
        <fullName evidence="9">Mycobacterial phospholipase C A</fullName>
    </alternativeName>
</protein>
<proteinExistence type="evidence at protein level"/>
<keyword id="KW-0134">Cell wall</keyword>
<keyword id="KW-0378">Hydrolase</keyword>
<keyword id="KW-1185">Reference proteome</keyword>
<keyword id="KW-0964">Secreted</keyword>
<keyword id="KW-0732">Signal</keyword>
<keyword id="KW-0843">Virulence</keyword>
<feature type="signal peptide" description="Tat-type signal" evidence="1">
    <location>
        <begin position="1"/>
        <end position="38"/>
    </location>
</feature>
<feature type="chain" id="PRO_0000023942" description="Phospholipase C A">
    <location>
        <begin position="39"/>
        <end position="520"/>
    </location>
</feature>
<feature type="sequence conflict" description="In Ref. 4." evidence="10" ref="4">
    <original>T</original>
    <variation>N</variation>
    <location>
        <position position="327"/>
    </location>
</feature>
<feature type="sequence conflict" description="In Ref. 4." evidence="10" ref="4">
    <original>GE</original>
    <variation>AQ</variation>
    <location>
        <begin position="369"/>
        <end position="370"/>
    </location>
</feature>
<feature type="sequence conflict" description="In Ref. 4." evidence="10" ref="4">
    <original>RG</original>
    <variation>PR</variation>
    <location>
        <begin position="406"/>
        <end position="407"/>
    </location>
</feature>
<feature type="sequence conflict" description="In Ref. 4." evidence="10" ref="4">
    <original>SGLCS</original>
    <variation>AGCAAEISR</variation>
    <location>
        <begin position="516"/>
        <end position="520"/>
    </location>
</feature>
<evidence type="ECO:0000255" key="1">
    <source>
        <dbReference type="PROSITE-ProRule" id="PRU00648"/>
    </source>
</evidence>
<evidence type="ECO:0000269" key="2">
    <source>
    </source>
</evidence>
<evidence type="ECO:0000269" key="3">
    <source>
    </source>
</evidence>
<evidence type="ECO:0000269" key="4">
    <source>
    </source>
</evidence>
<evidence type="ECO:0000269" key="5">
    <source>
    </source>
</evidence>
<evidence type="ECO:0000303" key="6">
    <source>
    </source>
</evidence>
<evidence type="ECO:0000303" key="7">
    <source>
    </source>
</evidence>
<evidence type="ECO:0000303" key="8">
    <source>
    </source>
</evidence>
<evidence type="ECO:0000303" key="9">
    <source>
    </source>
</evidence>
<evidence type="ECO:0000305" key="10"/>
<evidence type="ECO:0000305" key="11">
    <source>
    </source>
</evidence>
<accession>P9WIB5</accession>
<accession>L0T9D3</accession>
<accession>O08223</accession>
<accession>Q04001</accession>
<accession>Q50560</accession>
<accession>Q50771</accession>
<accession>Q50772</accession>
<accession>Q53408</accession>
<reference key="1">
    <citation type="journal article" date="1995" name="Infect. Immun.">
        <title>A species-specific nucleotide sequence of Mycobacterium tuberculosis encodes a protein that exhibits hemolytic activity when expressed in Escherichia coli.</title>
        <authorList>
            <person name="Leao S.C."/>
            <person name="Rocha C.L."/>
            <person name="Murillo L.A."/>
            <person name="Parra C.A."/>
            <person name="Patarroyo M.E."/>
        </authorList>
    </citation>
    <scope>NUCLEOTIDE SEQUENCE [GENOMIC DNA]</scope>
    <source>
        <strain>ATCC 25618 / H37Rv</strain>
    </source>
</reference>
<reference key="2">
    <citation type="journal article" date="1996" name="Infect. Immun.">
        <title>Biochemical and molecular analysis of phospholipase C and phospholipase D activity in mycobacteria.</title>
        <authorList>
            <person name="Johansen K.A."/>
            <person name="Gill R.E."/>
            <person name="Vasil M.L."/>
        </authorList>
    </citation>
    <scope>NUCLEOTIDE SEQUENCE [GENOMIC DNA]</scope>
    <scope>FUNCTION</scope>
    <scope>CATALYTIC ACTIVITY</scope>
    <scope>SUBCELLULAR LOCATION</scope>
    <source>
        <strain>ATCC 25618 / H37Rv</strain>
    </source>
</reference>
<reference key="3">
    <citation type="journal article" date="1998" name="Nature">
        <title>Deciphering the biology of Mycobacterium tuberculosis from the complete genome sequence.</title>
        <authorList>
            <person name="Cole S.T."/>
            <person name="Brosch R."/>
            <person name="Parkhill J."/>
            <person name="Garnier T."/>
            <person name="Churcher C.M."/>
            <person name="Harris D.E."/>
            <person name="Gordon S.V."/>
            <person name="Eiglmeier K."/>
            <person name="Gas S."/>
            <person name="Barry C.E. III"/>
            <person name="Tekaia F."/>
            <person name="Badcock K."/>
            <person name="Basham D."/>
            <person name="Brown D."/>
            <person name="Chillingworth T."/>
            <person name="Connor R."/>
            <person name="Davies R.M."/>
            <person name="Devlin K."/>
            <person name="Feltwell T."/>
            <person name="Gentles S."/>
            <person name="Hamlin N."/>
            <person name="Holroyd S."/>
            <person name="Hornsby T."/>
            <person name="Jagels K."/>
            <person name="Krogh A."/>
            <person name="McLean J."/>
            <person name="Moule S."/>
            <person name="Murphy L.D."/>
            <person name="Oliver S."/>
            <person name="Osborne J."/>
            <person name="Quail M.A."/>
            <person name="Rajandream M.A."/>
            <person name="Rogers J."/>
            <person name="Rutter S."/>
            <person name="Seeger K."/>
            <person name="Skelton S."/>
            <person name="Squares S."/>
            <person name="Squares R."/>
            <person name="Sulston J.E."/>
            <person name="Taylor K."/>
            <person name="Whitehead S."/>
            <person name="Barrell B.G."/>
        </authorList>
    </citation>
    <scope>NUCLEOTIDE SEQUENCE [LARGE SCALE GENOMIC DNA]</scope>
    <source>
        <strain>ATCC 25618 / H37Rv</strain>
    </source>
</reference>
<reference key="4">
    <citation type="journal article" date="1991" name="Infect. Immun.">
        <title>Isolation, characterization, and molecular cloning of a specific Mycobacterium tuberculosis antigen gene: identification of a species-specific sequence.</title>
        <authorList>
            <person name="Parra C.A."/>
            <person name="Londono L.P."/>
            <person name="del Portillo P."/>
            <person name="Patarroyo M.E."/>
        </authorList>
    </citation>
    <scope>NUCLEOTIDE SEQUENCE [GENOMIC DNA] OF 323-520</scope>
    <source>
        <strain>ATCC 25618 / H37Rv</strain>
    </source>
</reference>
<reference key="5">
    <citation type="journal article" date="1993" name="Braz. J. Med. Biol. Res.">
        <title>Tuberculosis: new strategies for the development of diagnostic tests and vaccines.</title>
        <authorList>
            <person name="Leao S.C."/>
        </authorList>
    </citation>
    <scope>NUCLEOTIDE SEQUENCE [GENOMIC DNA] OF 355-496</scope>
</reference>
<reference key="6">
    <citation type="journal article" date="1997" name="J. Clin. Microbiol.">
        <title>Analysis of genetic polymorphism in the phospholipase region of Mycobacterium tuberculosis.</title>
        <authorList>
            <person name="Vera-Cabrera L."/>
            <person name="Howard S.T."/>
            <person name="Laszlo A."/>
            <person name="Johnson W.M."/>
        </authorList>
    </citation>
    <scope>POLYMORPHISM</scope>
</reference>
<reference key="7">
    <citation type="journal article" date="2000" name="Braz. J. Med. Biol. Res.">
        <title>Evidence for the expression of native Mycobacterium tuberculosis phospholipase C: recognition by immune sera and detection of promoter activity.</title>
        <authorList>
            <person name="Matsui T."/>
            <person name="Carneiro C.R."/>
            <person name="Leao S.C."/>
        </authorList>
    </citation>
    <scope>SUBCELLULAR LOCATION</scope>
    <scope>EXPRESSION</scope>
    <source>
        <strain>H37Rv</strain>
    </source>
</reference>
<reference key="8">
    <citation type="journal article" date="2002" name="Mol. Microbiol.">
        <title>Phospholipases C are involved in the virulence of Mycobacterium tuberculosis.</title>
        <authorList>
            <person name="Raynaud C."/>
            <person name="Guilhot C."/>
            <person name="Rauzier J."/>
            <person name="Bordat Y."/>
            <person name="Pelicic V."/>
            <person name="Manganelli R."/>
            <person name="Smith I."/>
            <person name="Gicquel B."/>
            <person name="Jackson M."/>
        </authorList>
    </citation>
    <scope>INDUCTION</scope>
    <source>
        <strain>H37Rv</strain>
    </source>
</reference>
<reference key="9">
    <citation type="journal article" date="2010" name="Biochim. Biophys. Acta">
        <title>Evidence for the cytotoxic effects of Mycobacterium tuberculosis phospholipase C towards macrophages.</title>
        <authorList>
            <person name="Bakala N'goma J.C."/>
            <person name="Schue M."/>
            <person name="Carriere F."/>
            <person name="Geerlof A."/>
            <person name="Canaan S."/>
        </authorList>
    </citation>
    <scope>FUNCTION</scope>
    <scope>CATALYTIC ACTIVITY</scope>
    <scope>BIOPHYSICOCHEMICAL PROPERTIES</scope>
    <scope>SUBCELLULAR LOCATION</scope>
    <source>
        <strain>H37Rv</strain>
    </source>
</reference>
<reference key="10">
    <citation type="journal article" date="2011" name="Mol. Cell. Proteomics">
        <title>Proteogenomic analysis of Mycobacterium tuberculosis by high resolution mass spectrometry.</title>
        <authorList>
            <person name="Kelkar D.S."/>
            <person name="Kumar D."/>
            <person name="Kumar P."/>
            <person name="Balakrishnan L."/>
            <person name="Muthusamy B."/>
            <person name="Yadav A.K."/>
            <person name="Shrivastava P."/>
            <person name="Marimuthu A."/>
            <person name="Anand S."/>
            <person name="Sundaram H."/>
            <person name="Kingsbury R."/>
            <person name="Harsha H.C."/>
            <person name="Nair B."/>
            <person name="Prasad T.S."/>
            <person name="Chauhan D.S."/>
            <person name="Katoch K."/>
            <person name="Katoch V.M."/>
            <person name="Kumar P."/>
            <person name="Chaerkady R."/>
            <person name="Ramachandran S."/>
            <person name="Dash D."/>
            <person name="Pandey A."/>
        </authorList>
    </citation>
    <scope>IDENTIFICATION BY MASS SPECTROMETRY [LARGE SCALE ANALYSIS]</scope>
    <source>
        <strain>ATCC 25618 / H37Rv</strain>
    </source>
</reference>
<name>PHLA_MYCTU</name>
<dbReference type="EC" id="3.1.4.3" evidence="4 5"/>
<dbReference type="EMBL" id="L11868">
    <property type="protein sequence ID" value="AAB59164.1"/>
    <property type="status" value="ALT_INIT"/>
    <property type="molecule type" value="Genomic_DNA"/>
</dbReference>
<dbReference type="EMBL" id="L11868">
    <property type="protein sequence ID" value="AAB59165.1"/>
    <property type="status" value="ALT_SEQ"/>
    <property type="molecule type" value="Genomic_DNA"/>
</dbReference>
<dbReference type="EMBL" id="U49511">
    <property type="protein sequence ID" value="AAC18943.1"/>
    <property type="molecule type" value="Genomic_DNA"/>
</dbReference>
<dbReference type="EMBL" id="AL123456">
    <property type="protein sequence ID" value="CCP45139.1"/>
    <property type="status" value="ALT_INIT"/>
    <property type="molecule type" value="Genomic_DNA"/>
</dbReference>
<dbReference type="EMBL" id="M57952">
    <property type="protein sequence ID" value="AAA63288.1"/>
    <property type="status" value="ALT_FRAME"/>
    <property type="molecule type" value="Genomic_DNA"/>
</dbReference>
<dbReference type="EMBL" id="S69737">
    <property type="protein sequence ID" value="AAC60465.2"/>
    <property type="status" value="ALT_FRAME"/>
    <property type="molecule type" value="Genomic_DNA"/>
</dbReference>
<dbReference type="PIR" id="H70662">
    <property type="entry name" value="H70662"/>
</dbReference>
<dbReference type="RefSeq" id="NP_216867.1">
    <property type="nucleotide sequence ID" value="NC_000962.3"/>
</dbReference>
<dbReference type="SMR" id="P9WIB5"/>
<dbReference type="FunCoup" id="P9WIB5">
    <property type="interactions" value="30"/>
</dbReference>
<dbReference type="STRING" id="83332.Rv2351c"/>
<dbReference type="SwissLipids" id="SLP:000001395"/>
<dbReference type="PaxDb" id="83332-Rv2351c"/>
<dbReference type="DNASU" id="885995"/>
<dbReference type="GeneID" id="885995"/>
<dbReference type="KEGG" id="mtu:Rv2351c"/>
<dbReference type="TubercuList" id="Rv2351c"/>
<dbReference type="eggNOG" id="COG3511">
    <property type="taxonomic scope" value="Bacteria"/>
</dbReference>
<dbReference type="InParanoid" id="P9WIB5"/>
<dbReference type="OrthoDB" id="4181857at2"/>
<dbReference type="BRENDA" id="3.1.4.3">
    <property type="organism ID" value="3445"/>
</dbReference>
<dbReference type="PHI-base" id="PHI:5288"/>
<dbReference type="Proteomes" id="UP000001584">
    <property type="component" value="Chromosome"/>
</dbReference>
<dbReference type="GO" id="GO:0005576">
    <property type="term" value="C:extracellular region"/>
    <property type="evidence" value="ECO:0007669"/>
    <property type="project" value="UniProtKB-KW"/>
</dbReference>
<dbReference type="GO" id="GO:0034480">
    <property type="term" value="F:phosphatidylcholine phospholipase C activity"/>
    <property type="evidence" value="ECO:0000315"/>
    <property type="project" value="MTBBASE"/>
</dbReference>
<dbReference type="GO" id="GO:0004629">
    <property type="term" value="F:phospholipase C activity"/>
    <property type="evidence" value="ECO:0000314"/>
    <property type="project" value="MTBBASE"/>
</dbReference>
<dbReference type="GO" id="GO:0004767">
    <property type="term" value="F:sphingomyelin phosphodiesterase activity"/>
    <property type="evidence" value="ECO:0007669"/>
    <property type="project" value="RHEA"/>
</dbReference>
<dbReference type="GO" id="GO:0052008">
    <property type="term" value="P:symbiont-mediated disruption of host cellular anatomical structure"/>
    <property type="evidence" value="ECO:0000314"/>
    <property type="project" value="MTBBASE"/>
</dbReference>
<dbReference type="CDD" id="cd16014">
    <property type="entry name" value="PLC"/>
    <property type="match status" value="1"/>
</dbReference>
<dbReference type="FunFam" id="3.40.720.10:FF:000034">
    <property type="entry name" value="Membrane-associated phospholipase C"/>
    <property type="match status" value="1"/>
</dbReference>
<dbReference type="FunFam" id="3.40.720.10:FF:000036">
    <property type="entry name" value="Membrane-associated phospholipase C"/>
    <property type="match status" value="1"/>
</dbReference>
<dbReference type="Gene3D" id="3.40.720.10">
    <property type="entry name" value="Alkaline Phosphatase, subunit A"/>
    <property type="match status" value="2"/>
</dbReference>
<dbReference type="InterPro" id="IPR017850">
    <property type="entry name" value="Alkaline_phosphatase_core_sf"/>
</dbReference>
<dbReference type="InterPro" id="IPR007312">
    <property type="entry name" value="Phosphoesterase"/>
</dbReference>
<dbReference type="InterPro" id="IPR006311">
    <property type="entry name" value="TAT_signal"/>
</dbReference>
<dbReference type="PANTHER" id="PTHR31956:SF1">
    <property type="entry name" value="NON-SPECIFIC PHOSPHOLIPASE C1"/>
    <property type="match status" value="1"/>
</dbReference>
<dbReference type="PANTHER" id="PTHR31956">
    <property type="entry name" value="NON-SPECIFIC PHOSPHOLIPASE C4-RELATED"/>
    <property type="match status" value="1"/>
</dbReference>
<dbReference type="Pfam" id="PF04185">
    <property type="entry name" value="Phosphoesterase"/>
    <property type="match status" value="1"/>
</dbReference>
<dbReference type="PROSITE" id="PS51318">
    <property type="entry name" value="TAT"/>
    <property type="match status" value="1"/>
</dbReference>
<comment type="function">
    <text evidence="4 5">Involved in virulence (PubMed:20736081). Induces cytotoxic effects on mouse macrophage cell lines, via direct or indirect enzymatic hydrolysis of cell membrane phospholipids (PubMed:20736081). Hydrolyzes phosphatidylcholine and sphingomyelin (PubMed:20736081, PubMed:8757862). Does not have hemolytic activity (PubMed:20736081).</text>
</comment>
<comment type="catalytic activity">
    <reaction evidence="4 5">
        <text>a 1,2-diacyl-sn-glycero-3-phosphocholine + H2O = phosphocholine + a 1,2-diacyl-sn-glycerol + H(+)</text>
        <dbReference type="Rhea" id="RHEA:10604"/>
        <dbReference type="ChEBI" id="CHEBI:15377"/>
        <dbReference type="ChEBI" id="CHEBI:15378"/>
        <dbReference type="ChEBI" id="CHEBI:17815"/>
        <dbReference type="ChEBI" id="CHEBI:57643"/>
        <dbReference type="ChEBI" id="CHEBI:295975"/>
        <dbReference type="EC" id="3.1.4.3"/>
    </reaction>
    <physiologicalReaction direction="left-to-right" evidence="4 5">
        <dbReference type="Rhea" id="RHEA:10605"/>
    </physiologicalReaction>
</comment>
<comment type="catalytic activity">
    <reaction evidence="5">
        <text>a sphingomyelin + H2O = phosphocholine + an N-acylsphing-4-enine + H(+)</text>
        <dbReference type="Rhea" id="RHEA:19253"/>
        <dbReference type="ChEBI" id="CHEBI:15377"/>
        <dbReference type="ChEBI" id="CHEBI:15378"/>
        <dbReference type="ChEBI" id="CHEBI:17636"/>
        <dbReference type="ChEBI" id="CHEBI:52639"/>
        <dbReference type="ChEBI" id="CHEBI:295975"/>
    </reaction>
    <physiologicalReaction direction="left-to-right" evidence="5">
        <dbReference type="Rhea" id="RHEA:19254"/>
    </physiologicalReaction>
</comment>
<comment type="catalytic activity">
    <reaction evidence="4">
        <text>1,2-dihexadecanoyl-sn-glycero-3-phosphocholine + H2O = 1,2-dihexadecanoyl-sn-glycerol + phosphocholine + H(+)</text>
        <dbReference type="Rhea" id="RHEA:45304"/>
        <dbReference type="ChEBI" id="CHEBI:15377"/>
        <dbReference type="ChEBI" id="CHEBI:15378"/>
        <dbReference type="ChEBI" id="CHEBI:72999"/>
        <dbReference type="ChEBI" id="CHEBI:82929"/>
        <dbReference type="ChEBI" id="CHEBI:295975"/>
    </reaction>
    <physiologicalReaction direction="left-to-right" evidence="4">
        <dbReference type="Rhea" id="RHEA:45305"/>
    </physiologicalReaction>
</comment>
<comment type="biophysicochemical properties">
    <phDependence>
        <text evidence="4">Optimum pH is 7.5.</text>
    </phDependence>
    <temperatureDependence>
        <text evidence="4">Optimum temperature is 37 degrees Celsius.</text>
    </temperatureDependence>
</comment>
<comment type="subcellular location">
    <subcellularLocation>
        <location evidence="4">Secreted</location>
        <location evidence="4">Cell wall</location>
    </subcellularLocation>
    <text evidence="2 4 5">Remains associated with the cell.</text>
</comment>
<comment type="induction">
    <text evidence="2 3">Constitutively expressed (PubMed:11050656). Expression is induced in vitro in the presence of phosphatidylcholine. Also induced upon infection of THP-1 macrophages (PubMed:12100560).</text>
</comment>
<comment type="PTM">
    <text evidence="1">Predicted to be exported by the Tat system. The position of the signal peptide cleavage has not been experimentally proven.</text>
</comment>
<comment type="miscellaneous">
    <text evidence="11">Polymorphism was discovered in the phospholipase plcA/B/C region. Some strains seem to lack both plcA and plcB genes, while others lack only plcB.</text>
</comment>
<comment type="miscellaneous">
    <text evidence="11">An IS6110 insertion element has been found in strain LCDC-194, interrupting the plcA gene.</text>
</comment>
<comment type="similarity">
    <text evidence="10">Belongs to the bacterial phospholipase C family.</text>
</comment>
<comment type="sequence caution" evidence="10">
    <conflict type="frameshift">
        <sequence resource="EMBL-CDS" id="AAA63288"/>
    </conflict>
</comment>
<comment type="sequence caution" evidence="10">
    <conflict type="erroneous initiation">
        <sequence resource="EMBL-CDS" id="AAB59164"/>
    </conflict>
</comment>
<comment type="sequence caution" evidence="10">
    <conflict type="frameshift">
        <sequence resource="EMBL-CDS" id="AAC60465"/>
    </conflict>
</comment>
<comment type="sequence caution" evidence="10">
    <conflict type="erroneous initiation">
        <sequence resource="EMBL-CDS" id="CCP45139"/>
    </conflict>
    <text>Truncated N-terminus.</text>
</comment>
<gene>
    <name evidence="6" type="primary">plcA</name>
    <name evidence="9" type="synonym">mpcA</name>
    <name evidence="7" type="synonym">mtp40</name>
    <name type="ordered locus">Rv2351c</name>
    <name type="ORF">MTCY98.20c</name>
</gene>
<organism>
    <name type="scientific">Mycobacterium tuberculosis (strain ATCC 25618 / H37Rv)</name>
    <dbReference type="NCBI Taxonomy" id="83332"/>
    <lineage>
        <taxon>Bacteria</taxon>
        <taxon>Bacillati</taxon>
        <taxon>Actinomycetota</taxon>
        <taxon>Actinomycetes</taxon>
        <taxon>Mycobacteriales</taxon>
        <taxon>Mycobacteriaceae</taxon>
        <taxon>Mycobacterium</taxon>
        <taxon>Mycobacterium tuberculosis complex</taxon>
    </lineage>
</organism>